<organism>
    <name type="scientific">Staphylococcus aureus (strain N315)</name>
    <dbReference type="NCBI Taxonomy" id="158879"/>
    <lineage>
        <taxon>Bacteria</taxon>
        <taxon>Bacillati</taxon>
        <taxon>Bacillota</taxon>
        <taxon>Bacilli</taxon>
        <taxon>Bacillales</taxon>
        <taxon>Staphylococcaceae</taxon>
        <taxon>Staphylococcus</taxon>
    </lineage>
</organism>
<dbReference type="EMBL" id="BA000018">
    <property type="protein sequence ID" value="BAB41992.1"/>
    <property type="molecule type" value="Genomic_DNA"/>
</dbReference>
<dbReference type="PIR" id="E89854">
    <property type="entry name" value="E89854"/>
</dbReference>
<dbReference type="RefSeq" id="WP_000974460.1">
    <property type="nucleotide sequence ID" value="NC_002745.2"/>
</dbReference>
<dbReference type="SMR" id="Q7A6M9"/>
<dbReference type="EnsemblBacteria" id="BAB41992">
    <property type="protein sequence ID" value="BAB41992"/>
    <property type="gene ID" value="BAB41992"/>
</dbReference>
<dbReference type="KEGG" id="sau:SA0755"/>
<dbReference type="HOGENOM" id="CLU_106355_2_1_9"/>
<dbReference type="GO" id="GO:0006979">
    <property type="term" value="P:response to oxidative stress"/>
    <property type="evidence" value="ECO:0007669"/>
    <property type="project" value="InterPro"/>
</dbReference>
<dbReference type="Gene3D" id="2.20.25.10">
    <property type="match status" value="1"/>
</dbReference>
<dbReference type="Gene3D" id="3.30.300.20">
    <property type="match status" value="1"/>
</dbReference>
<dbReference type="InterPro" id="IPR015946">
    <property type="entry name" value="KH_dom-like_a/b"/>
</dbReference>
<dbReference type="InterPro" id="IPR019953">
    <property type="entry name" value="OHR"/>
</dbReference>
<dbReference type="InterPro" id="IPR003718">
    <property type="entry name" value="OsmC/Ohr_fam"/>
</dbReference>
<dbReference type="InterPro" id="IPR036102">
    <property type="entry name" value="OsmC/Ohrsf"/>
</dbReference>
<dbReference type="NCBIfam" id="TIGR03561">
    <property type="entry name" value="organ_hyd_perox"/>
    <property type="match status" value="1"/>
</dbReference>
<dbReference type="PANTHER" id="PTHR33797">
    <property type="entry name" value="ORGANIC HYDROPEROXIDE RESISTANCE PROTEIN-LIKE"/>
    <property type="match status" value="1"/>
</dbReference>
<dbReference type="PANTHER" id="PTHR33797:SF2">
    <property type="entry name" value="ORGANIC HYDROPEROXIDE RESISTANCE PROTEIN-LIKE"/>
    <property type="match status" value="1"/>
</dbReference>
<dbReference type="Pfam" id="PF02566">
    <property type="entry name" value="OsmC"/>
    <property type="match status" value="1"/>
</dbReference>
<dbReference type="SUPFAM" id="SSF82784">
    <property type="entry name" value="OsmC-like"/>
    <property type="match status" value="1"/>
</dbReference>
<reference key="1">
    <citation type="journal article" date="2001" name="Lancet">
        <title>Whole genome sequencing of meticillin-resistant Staphylococcus aureus.</title>
        <authorList>
            <person name="Kuroda M."/>
            <person name="Ohta T."/>
            <person name="Uchiyama I."/>
            <person name="Baba T."/>
            <person name="Yuzawa H."/>
            <person name="Kobayashi I."/>
            <person name="Cui L."/>
            <person name="Oguchi A."/>
            <person name="Aoki K."/>
            <person name="Nagai Y."/>
            <person name="Lian J.-Q."/>
            <person name="Ito T."/>
            <person name="Kanamori M."/>
            <person name="Matsumaru H."/>
            <person name="Maruyama A."/>
            <person name="Murakami H."/>
            <person name="Hosoyama A."/>
            <person name="Mizutani-Ui Y."/>
            <person name="Takahashi N.K."/>
            <person name="Sawano T."/>
            <person name="Inoue R."/>
            <person name="Kaito C."/>
            <person name="Sekimizu K."/>
            <person name="Hirakawa H."/>
            <person name="Kuhara S."/>
            <person name="Goto S."/>
            <person name="Yabuzaki J."/>
            <person name="Kanehisa M."/>
            <person name="Yamashita A."/>
            <person name="Oshima K."/>
            <person name="Furuya K."/>
            <person name="Yoshino C."/>
            <person name="Shiba T."/>
            <person name="Hattori M."/>
            <person name="Ogasawara N."/>
            <person name="Hayashi H."/>
            <person name="Hiramatsu K."/>
        </authorList>
    </citation>
    <scope>NUCLEOTIDE SEQUENCE [LARGE SCALE GENOMIC DNA]</scope>
    <source>
        <strain>N315</strain>
    </source>
</reference>
<reference key="2">
    <citation type="submission" date="2007-10" db="UniProtKB">
        <title>Shotgun proteomic analysis of total and membrane protein extracts of S. aureus strain N315.</title>
        <authorList>
            <person name="Vaezzadeh A.R."/>
            <person name="Deshusses J."/>
            <person name="Lescuyer P."/>
            <person name="Hochstrasser D.F."/>
        </authorList>
    </citation>
    <scope>IDENTIFICATION BY MASS SPECTROMETRY [LARGE SCALE ANALYSIS]</scope>
    <source>
        <strain>N315</strain>
    </source>
</reference>
<gene>
    <name type="ordered locus">SA0755</name>
</gene>
<evidence type="ECO:0000305" key="1"/>
<protein>
    <recommendedName>
        <fullName>Organic hydroperoxide resistance protein-like</fullName>
    </recommendedName>
</protein>
<sequence>MAIHYETKATNVGGRKGHVYTDDRALDIDIVPPAQADGKATNPEQLFAAGYASCFNGAFDLILKQNKVRDAHPEVTLTVRLEDDSDSESPKLSVSIDATIKNVISQEEAEKYLQMAHEFCPYSKATQGNINVDLNVNVVD</sequence>
<feature type="chain" id="PRO_0000288960" description="Organic hydroperoxide resistance protein-like">
    <location>
        <begin position="1"/>
        <end position="140"/>
    </location>
</feature>
<name>OHRL_STAAN</name>
<proteinExistence type="evidence at protein level"/>
<accession>Q7A6M9</accession>
<comment type="similarity">
    <text evidence="1">Belongs to the OsmC/Ohr family.</text>
</comment>